<protein>
    <recommendedName>
        <fullName>Protein EVI2A</fullName>
    </recommendedName>
    <alternativeName>
        <fullName>Ecotropic viral integration site 2A protein</fullName>
        <shortName>EVI-2A</shortName>
    </alternativeName>
</protein>
<accession>P20934</accession>
<accession>Q6DKP1</accession>
<feature type="signal peptide" evidence="1">
    <location>
        <begin position="1"/>
        <end position="19"/>
    </location>
</feature>
<feature type="chain" id="PRO_0000021212" description="Protein EVI2A">
    <location>
        <begin position="20"/>
        <end position="223"/>
    </location>
</feature>
<feature type="topological domain" description="Extracellular" evidence="1">
    <location>
        <begin position="20"/>
        <end position="125"/>
    </location>
</feature>
<feature type="transmembrane region" description="Helical" evidence="1">
    <location>
        <begin position="126"/>
        <end position="151"/>
    </location>
</feature>
<feature type="topological domain" description="Cytoplasmic" evidence="1">
    <location>
        <begin position="152"/>
        <end position="223"/>
    </location>
</feature>
<feature type="region of interest" description="Disordered" evidence="2">
    <location>
        <begin position="40"/>
        <end position="109"/>
    </location>
</feature>
<feature type="compositionally biased region" description="Polar residues" evidence="2">
    <location>
        <begin position="40"/>
        <end position="60"/>
    </location>
</feature>
<feature type="compositionally biased region" description="Polar residues" evidence="2">
    <location>
        <begin position="83"/>
        <end position="102"/>
    </location>
</feature>
<feature type="modified residue" description="Phosphoserine" evidence="5">
    <location>
        <position position="197"/>
    </location>
</feature>
<feature type="modified residue" description="Phosphoserine" evidence="5">
    <location>
        <position position="203"/>
    </location>
</feature>
<feature type="glycosylation site" description="N-linked (GlcNAc...) asparagine" evidence="1">
    <location>
        <position position="28"/>
    </location>
</feature>
<feature type="glycosylation site" description="N-linked (GlcNAc...) asparagine" evidence="1">
    <location>
        <position position="46"/>
    </location>
</feature>
<feature type="glycosylation site" description="N-linked (GlcNAc...) asparagine" evidence="1">
    <location>
        <position position="55"/>
    </location>
</feature>
<feature type="glycosylation site" description="N-linked (GlcNAc...) asparagine" evidence="1">
    <location>
        <position position="120"/>
    </location>
</feature>
<feature type="sequence conflict" description="In Ref. 1; AAA37583." evidence="4" ref="1">
    <original>V</original>
    <variation>A</variation>
    <location>
        <position position="135"/>
    </location>
</feature>
<gene>
    <name type="primary">Evi2a</name>
    <name type="synonym">Evi-2</name>
    <name type="synonym">Evi-2a</name>
    <name type="synonym">Evi2</name>
</gene>
<proteinExistence type="evidence at protein level"/>
<comment type="function">
    <text>May complex with itself or/and other proteins within the membrane, to function as part of a cell-surface receptor.</text>
</comment>
<comment type="subcellular location">
    <subcellularLocation>
        <location>Membrane</location>
        <topology>Single-pass type I membrane protein</topology>
    </subcellularLocation>
</comment>
<comment type="disease">
    <text evidence="3">Expression of this gene is altered by viral integration and this altered expression may predispose cells to myeloid disease (PubMed:2167436).</text>
</comment>
<comment type="similarity">
    <text evidence="4">Belongs to the EVI2A family.</text>
</comment>
<keyword id="KW-0325">Glycoprotein</keyword>
<keyword id="KW-0472">Membrane</keyword>
<keyword id="KW-0597">Phosphoprotein</keyword>
<keyword id="KW-0656">Proto-oncogene</keyword>
<keyword id="KW-1185">Reference proteome</keyword>
<keyword id="KW-0732">Signal</keyword>
<keyword id="KW-0812">Transmembrane</keyword>
<keyword id="KW-1133">Transmembrane helix</keyword>
<evidence type="ECO:0000255" key="1"/>
<evidence type="ECO:0000256" key="2">
    <source>
        <dbReference type="SAM" id="MobiDB-lite"/>
    </source>
</evidence>
<evidence type="ECO:0000269" key="3">
    <source>
    </source>
</evidence>
<evidence type="ECO:0000305" key="4"/>
<evidence type="ECO:0007744" key="5">
    <source>
    </source>
</evidence>
<sequence>MEHKGQYLHLVFLMTTVWASSSSGTRPNYTHLWASSVTASGSSNQNGSSRHPSDNNTNLVTPAVGHKVSATDKPASSPPVPLASTSTLKSSTPHAFRNSSPTAEIKSQGETFKKEVCEENTSNTAMLICLIVIAVLFLICTFLFLSTVVLANKVSSLKRSKQVGKRQPRSNGDFLASSGLWTAESDTWKRAKELTGSNLLLQSPGVLTAARERKHEEGTEKLN</sequence>
<name>EVI2A_MOUSE</name>
<organism>
    <name type="scientific">Mus musculus</name>
    <name type="common">Mouse</name>
    <dbReference type="NCBI Taxonomy" id="10090"/>
    <lineage>
        <taxon>Eukaryota</taxon>
        <taxon>Metazoa</taxon>
        <taxon>Chordata</taxon>
        <taxon>Craniata</taxon>
        <taxon>Vertebrata</taxon>
        <taxon>Euteleostomi</taxon>
        <taxon>Mammalia</taxon>
        <taxon>Eutheria</taxon>
        <taxon>Euarchontoglires</taxon>
        <taxon>Glires</taxon>
        <taxon>Rodentia</taxon>
        <taxon>Myomorpha</taxon>
        <taxon>Muroidea</taxon>
        <taxon>Muridae</taxon>
        <taxon>Murinae</taxon>
        <taxon>Mus</taxon>
        <taxon>Mus</taxon>
    </lineage>
</organism>
<reference key="1">
    <citation type="journal article" date="1990" name="Mol. Cell. Biol.">
        <title>Evi-2, a common integration site involved in murine myeloid leukemogenesis.</title>
        <authorList>
            <person name="Buchberg A.M."/>
            <person name="Bedigian H.G."/>
            <person name="Jenkins N.A."/>
            <person name="Copeland N.G."/>
        </authorList>
    </citation>
    <scope>NUCLEOTIDE SEQUENCE [MRNA]</scope>
    <scope>INVOLVEMENT IN MYELOGENOUS LEUKEMIA</scope>
    <source>
        <strain>C57BL/6J</strain>
        <tissue>Brain</tissue>
    </source>
</reference>
<reference key="2">
    <citation type="journal article" date="2005" name="Science">
        <title>The transcriptional landscape of the mammalian genome.</title>
        <authorList>
            <person name="Carninci P."/>
            <person name="Kasukawa T."/>
            <person name="Katayama S."/>
            <person name="Gough J."/>
            <person name="Frith M.C."/>
            <person name="Maeda N."/>
            <person name="Oyama R."/>
            <person name="Ravasi T."/>
            <person name="Lenhard B."/>
            <person name="Wells C."/>
            <person name="Kodzius R."/>
            <person name="Shimokawa K."/>
            <person name="Bajic V.B."/>
            <person name="Brenner S.E."/>
            <person name="Batalov S."/>
            <person name="Forrest A.R."/>
            <person name="Zavolan M."/>
            <person name="Davis M.J."/>
            <person name="Wilming L.G."/>
            <person name="Aidinis V."/>
            <person name="Allen J.E."/>
            <person name="Ambesi-Impiombato A."/>
            <person name="Apweiler R."/>
            <person name="Aturaliya R.N."/>
            <person name="Bailey T.L."/>
            <person name="Bansal M."/>
            <person name="Baxter L."/>
            <person name="Beisel K.W."/>
            <person name="Bersano T."/>
            <person name="Bono H."/>
            <person name="Chalk A.M."/>
            <person name="Chiu K.P."/>
            <person name="Choudhary V."/>
            <person name="Christoffels A."/>
            <person name="Clutterbuck D.R."/>
            <person name="Crowe M.L."/>
            <person name="Dalla E."/>
            <person name="Dalrymple B.P."/>
            <person name="de Bono B."/>
            <person name="Della Gatta G."/>
            <person name="di Bernardo D."/>
            <person name="Down T."/>
            <person name="Engstrom P."/>
            <person name="Fagiolini M."/>
            <person name="Faulkner G."/>
            <person name="Fletcher C.F."/>
            <person name="Fukushima T."/>
            <person name="Furuno M."/>
            <person name="Futaki S."/>
            <person name="Gariboldi M."/>
            <person name="Georgii-Hemming P."/>
            <person name="Gingeras T.R."/>
            <person name="Gojobori T."/>
            <person name="Green R.E."/>
            <person name="Gustincich S."/>
            <person name="Harbers M."/>
            <person name="Hayashi Y."/>
            <person name="Hensch T.K."/>
            <person name="Hirokawa N."/>
            <person name="Hill D."/>
            <person name="Huminiecki L."/>
            <person name="Iacono M."/>
            <person name="Ikeo K."/>
            <person name="Iwama A."/>
            <person name="Ishikawa T."/>
            <person name="Jakt M."/>
            <person name="Kanapin A."/>
            <person name="Katoh M."/>
            <person name="Kawasawa Y."/>
            <person name="Kelso J."/>
            <person name="Kitamura H."/>
            <person name="Kitano H."/>
            <person name="Kollias G."/>
            <person name="Krishnan S.P."/>
            <person name="Kruger A."/>
            <person name="Kummerfeld S.K."/>
            <person name="Kurochkin I.V."/>
            <person name="Lareau L.F."/>
            <person name="Lazarevic D."/>
            <person name="Lipovich L."/>
            <person name="Liu J."/>
            <person name="Liuni S."/>
            <person name="McWilliam S."/>
            <person name="Madan Babu M."/>
            <person name="Madera M."/>
            <person name="Marchionni L."/>
            <person name="Matsuda H."/>
            <person name="Matsuzawa S."/>
            <person name="Miki H."/>
            <person name="Mignone F."/>
            <person name="Miyake S."/>
            <person name="Morris K."/>
            <person name="Mottagui-Tabar S."/>
            <person name="Mulder N."/>
            <person name="Nakano N."/>
            <person name="Nakauchi H."/>
            <person name="Ng P."/>
            <person name="Nilsson R."/>
            <person name="Nishiguchi S."/>
            <person name="Nishikawa S."/>
            <person name="Nori F."/>
            <person name="Ohara O."/>
            <person name="Okazaki Y."/>
            <person name="Orlando V."/>
            <person name="Pang K.C."/>
            <person name="Pavan W.J."/>
            <person name="Pavesi G."/>
            <person name="Pesole G."/>
            <person name="Petrovsky N."/>
            <person name="Piazza S."/>
            <person name="Reed J."/>
            <person name="Reid J.F."/>
            <person name="Ring B.Z."/>
            <person name="Ringwald M."/>
            <person name="Rost B."/>
            <person name="Ruan Y."/>
            <person name="Salzberg S.L."/>
            <person name="Sandelin A."/>
            <person name="Schneider C."/>
            <person name="Schoenbach C."/>
            <person name="Sekiguchi K."/>
            <person name="Semple C.A."/>
            <person name="Seno S."/>
            <person name="Sessa L."/>
            <person name="Sheng Y."/>
            <person name="Shibata Y."/>
            <person name="Shimada H."/>
            <person name="Shimada K."/>
            <person name="Silva D."/>
            <person name="Sinclair B."/>
            <person name="Sperling S."/>
            <person name="Stupka E."/>
            <person name="Sugiura K."/>
            <person name="Sultana R."/>
            <person name="Takenaka Y."/>
            <person name="Taki K."/>
            <person name="Tammoja K."/>
            <person name="Tan S.L."/>
            <person name="Tang S."/>
            <person name="Taylor M.S."/>
            <person name="Tegner J."/>
            <person name="Teichmann S.A."/>
            <person name="Ueda H.R."/>
            <person name="van Nimwegen E."/>
            <person name="Verardo R."/>
            <person name="Wei C.L."/>
            <person name="Yagi K."/>
            <person name="Yamanishi H."/>
            <person name="Zabarovsky E."/>
            <person name="Zhu S."/>
            <person name="Zimmer A."/>
            <person name="Hide W."/>
            <person name="Bult C."/>
            <person name="Grimmond S.M."/>
            <person name="Teasdale R.D."/>
            <person name="Liu E.T."/>
            <person name="Brusic V."/>
            <person name="Quackenbush J."/>
            <person name="Wahlestedt C."/>
            <person name="Mattick J.S."/>
            <person name="Hume D.A."/>
            <person name="Kai C."/>
            <person name="Sasaki D."/>
            <person name="Tomaru Y."/>
            <person name="Fukuda S."/>
            <person name="Kanamori-Katayama M."/>
            <person name="Suzuki M."/>
            <person name="Aoki J."/>
            <person name="Arakawa T."/>
            <person name="Iida J."/>
            <person name="Imamura K."/>
            <person name="Itoh M."/>
            <person name="Kato T."/>
            <person name="Kawaji H."/>
            <person name="Kawagashira N."/>
            <person name="Kawashima T."/>
            <person name="Kojima M."/>
            <person name="Kondo S."/>
            <person name="Konno H."/>
            <person name="Nakano K."/>
            <person name="Ninomiya N."/>
            <person name="Nishio T."/>
            <person name="Okada M."/>
            <person name="Plessy C."/>
            <person name="Shibata K."/>
            <person name="Shiraki T."/>
            <person name="Suzuki S."/>
            <person name="Tagami M."/>
            <person name="Waki K."/>
            <person name="Watahiki A."/>
            <person name="Okamura-Oho Y."/>
            <person name="Suzuki H."/>
            <person name="Kawai J."/>
            <person name="Hayashizaki Y."/>
        </authorList>
    </citation>
    <scope>NUCLEOTIDE SEQUENCE [LARGE SCALE MRNA]</scope>
    <source>
        <strain>C57BL/6J</strain>
        <strain>NOD</strain>
        <tissue>Brain cortex</tissue>
        <tissue>Corpora quadrigemina</tissue>
        <tissue>Medulla oblongata</tissue>
        <tissue>Spinal cord</tissue>
    </source>
</reference>
<reference key="3">
    <citation type="journal article" date="2009" name="PLoS Biol.">
        <title>Lineage-specific biology revealed by a finished genome assembly of the mouse.</title>
        <authorList>
            <person name="Church D.M."/>
            <person name="Goodstadt L."/>
            <person name="Hillier L.W."/>
            <person name="Zody M.C."/>
            <person name="Goldstein S."/>
            <person name="She X."/>
            <person name="Bult C.J."/>
            <person name="Agarwala R."/>
            <person name="Cherry J.L."/>
            <person name="DiCuccio M."/>
            <person name="Hlavina W."/>
            <person name="Kapustin Y."/>
            <person name="Meric P."/>
            <person name="Maglott D."/>
            <person name="Birtle Z."/>
            <person name="Marques A.C."/>
            <person name="Graves T."/>
            <person name="Zhou S."/>
            <person name="Teague B."/>
            <person name="Potamousis K."/>
            <person name="Churas C."/>
            <person name="Place M."/>
            <person name="Herschleb J."/>
            <person name="Runnheim R."/>
            <person name="Forrest D."/>
            <person name="Amos-Landgraf J."/>
            <person name="Schwartz D.C."/>
            <person name="Cheng Z."/>
            <person name="Lindblad-Toh K."/>
            <person name="Eichler E.E."/>
            <person name="Ponting C.P."/>
        </authorList>
    </citation>
    <scope>NUCLEOTIDE SEQUENCE [LARGE SCALE GENOMIC DNA]</scope>
    <source>
        <strain>C57BL/6J</strain>
    </source>
</reference>
<reference key="4">
    <citation type="submission" date="2005-07" db="EMBL/GenBank/DDBJ databases">
        <authorList>
            <person name="Mural R.J."/>
            <person name="Adams M.D."/>
            <person name="Myers E.W."/>
            <person name="Smith H.O."/>
            <person name="Venter J.C."/>
        </authorList>
    </citation>
    <scope>NUCLEOTIDE SEQUENCE [LARGE SCALE GENOMIC DNA]</scope>
</reference>
<reference key="5">
    <citation type="journal article" date="2004" name="Genome Res.">
        <title>The status, quality, and expansion of the NIH full-length cDNA project: the Mammalian Gene Collection (MGC).</title>
        <authorList>
            <consortium name="The MGC Project Team"/>
        </authorList>
    </citation>
    <scope>NUCLEOTIDE SEQUENCE [LARGE SCALE MRNA]</scope>
    <source>
        <strain>C57BL/6J</strain>
        <tissue>Mammary gland</tissue>
    </source>
</reference>
<reference key="6">
    <citation type="journal article" date="2009" name="Immunity">
        <title>The phagosomal proteome in interferon-gamma-activated macrophages.</title>
        <authorList>
            <person name="Trost M."/>
            <person name="English L."/>
            <person name="Lemieux S."/>
            <person name="Courcelles M."/>
            <person name="Desjardins M."/>
            <person name="Thibault P."/>
        </authorList>
    </citation>
    <scope>PHOSPHORYLATION [LARGE SCALE ANALYSIS] AT SER-197 AND SER-203</scope>
    <scope>IDENTIFICATION BY MASS SPECTROMETRY [LARGE SCALE ANALYSIS]</scope>
</reference>
<reference key="7">
    <citation type="journal article" date="2010" name="Cell">
        <title>A tissue-specific atlas of mouse protein phosphorylation and expression.</title>
        <authorList>
            <person name="Huttlin E.L."/>
            <person name="Jedrychowski M.P."/>
            <person name="Elias J.E."/>
            <person name="Goswami T."/>
            <person name="Rad R."/>
            <person name="Beausoleil S.A."/>
            <person name="Villen J."/>
            <person name="Haas W."/>
            <person name="Sowa M.E."/>
            <person name="Gygi S.P."/>
        </authorList>
    </citation>
    <scope>IDENTIFICATION BY MASS SPECTROMETRY [LARGE SCALE ANALYSIS]</scope>
    <source>
        <tissue>Spleen</tissue>
    </source>
</reference>
<dbReference type="EMBL" id="M34896">
    <property type="protein sequence ID" value="AAA37583.1"/>
    <property type="molecule type" value="mRNA"/>
</dbReference>
<dbReference type="EMBL" id="M34897">
    <property type="protein sequence ID" value="AAA37584.1"/>
    <property type="molecule type" value="mRNA"/>
</dbReference>
<dbReference type="EMBL" id="AK044098">
    <property type="protein sequence ID" value="BAC31775.1"/>
    <property type="molecule type" value="mRNA"/>
</dbReference>
<dbReference type="EMBL" id="AK046407">
    <property type="protein sequence ID" value="BAC32711.1"/>
    <property type="molecule type" value="mRNA"/>
</dbReference>
<dbReference type="EMBL" id="AK160302">
    <property type="protein sequence ID" value="BAE35731.1"/>
    <property type="molecule type" value="mRNA"/>
</dbReference>
<dbReference type="EMBL" id="AK162958">
    <property type="protein sequence ID" value="BAE37135.1"/>
    <property type="molecule type" value="mRNA"/>
</dbReference>
<dbReference type="EMBL" id="AK170527">
    <property type="protein sequence ID" value="BAE41859.1"/>
    <property type="molecule type" value="mRNA"/>
</dbReference>
<dbReference type="EMBL" id="AK171594">
    <property type="protein sequence ID" value="BAE42550.1"/>
    <property type="molecule type" value="mRNA"/>
</dbReference>
<dbReference type="EMBL" id="AL591174">
    <property type="status" value="NOT_ANNOTATED_CDS"/>
    <property type="molecule type" value="Genomic_DNA"/>
</dbReference>
<dbReference type="EMBL" id="CH466556">
    <property type="protein sequence ID" value="EDL15609.1"/>
    <property type="molecule type" value="Genomic_DNA"/>
</dbReference>
<dbReference type="EMBL" id="BC038124">
    <property type="protein sequence ID" value="AAH38124.1"/>
    <property type="molecule type" value="mRNA"/>
</dbReference>
<dbReference type="CCDS" id="CCDS25122.1"/>
<dbReference type="PIR" id="A36462">
    <property type="entry name" value="A36462"/>
</dbReference>
<dbReference type="RefSeq" id="NP_001028883.1">
    <property type="nucleotide sequence ID" value="NM_001033711.1"/>
</dbReference>
<dbReference type="RefSeq" id="NP_034291.1">
    <property type="nucleotide sequence ID" value="NM_010161.3"/>
</dbReference>
<dbReference type="SMR" id="P20934"/>
<dbReference type="BioGRID" id="199544">
    <property type="interactions" value="1"/>
</dbReference>
<dbReference type="FunCoup" id="P20934">
    <property type="interactions" value="42"/>
</dbReference>
<dbReference type="STRING" id="10090.ENSMUSP00000125936"/>
<dbReference type="GlyConnect" id="2626">
    <property type="glycosylation" value="2 N-Linked glycans (1 site)"/>
</dbReference>
<dbReference type="GlyCosmos" id="P20934">
    <property type="glycosylation" value="4 sites, 2 glycans"/>
</dbReference>
<dbReference type="GlyGen" id="P20934">
    <property type="glycosylation" value="6 sites, 4 N-linked glycans (3 sites), 1 O-linked glycan (1 site)"/>
</dbReference>
<dbReference type="iPTMnet" id="P20934"/>
<dbReference type="PhosphoSitePlus" id="P20934"/>
<dbReference type="PaxDb" id="10090-ENSMUSP00000125936"/>
<dbReference type="PeptideAtlas" id="P20934"/>
<dbReference type="ProteomicsDB" id="275697"/>
<dbReference type="DNASU" id="14017"/>
<dbReference type="Ensembl" id="ENSMUST00000103236.4">
    <property type="protein sequence ID" value="ENSMUSP00000099526.4"/>
    <property type="gene ID" value="ENSMUSG00000078771.12"/>
</dbReference>
<dbReference type="Ensembl" id="ENSMUST00000133148.3">
    <property type="protein sequence ID" value="ENSMUSP00000159581.1"/>
    <property type="gene ID" value="ENSMUSG00000078771.12"/>
</dbReference>
<dbReference type="GeneID" id="14017"/>
<dbReference type="KEGG" id="mmu:14017"/>
<dbReference type="UCSC" id="uc007kkq.1">
    <property type="organism name" value="mouse"/>
</dbReference>
<dbReference type="AGR" id="MGI:95458"/>
<dbReference type="CTD" id="2123"/>
<dbReference type="MGI" id="MGI:95458">
    <property type="gene designation" value="Evi2a"/>
</dbReference>
<dbReference type="VEuPathDB" id="HostDB:ENSMUSG00000078771"/>
<dbReference type="eggNOG" id="ENOG502S3SG">
    <property type="taxonomic scope" value="Eukaryota"/>
</dbReference>
<dbReference type="GeneTree" id="ENSGT00390000003004"/>
<dbReference type="HOGENOM" id="CLU_073339_0_0_1"/>
<dbReference type="InParanoid" id="P20934"/>
<dbReference type="OMA" id="ACDENNH"/>
<dbReference type="OrthoDB" id="9448427at2759"/>
<dbReference type="PhylomeDB" id="P20934"/>
<dbReference type="TreeFam" id="TF336075"/>
<dbReference type="BioGRID-ORCS" id="14017">
    <property type="hits" value="2 hits in 77 CRISPR screens"/>
</dbReference>
<dbReference type="PRO" id="PR:P20934"/>
<dbReference type="Proteomes" id="UP000000589">
    <property type="component" value="Chromosome 11"/>
</dbReference>
<dbReference type="RNAct" id="P20934">
    <property type="molecule type" value="protein"/>
</dbReference>
<dbReference type="Bgee" id="ENSMUSG00000078771">
    <property type="expression patterns" value="Expressed in granulocyte and 202 other cell types or tissues"/>
</dbReference>
<dbReference type="ExpressionAtlas" id="P20934">
    <property type="expression patterns" value="baseline and differential"/>
</dbReference>
<dbReference type="GO" id="GO:0005929">
    <property type="term" value="C:cilium"/>
    <property type="evidence" value="ECO:0007669"/>
    <property type="project" value="Ensembl"/>
</dbReference>
<dbReference type="GO" id="GO:0005829">
    <property type="term" value="C:cytosol"/>
    <property type="evidence" value="ECO:0007669"/>
    <property type="project" value="Ensembl"/>
</dbReference>
<dbReference type="GO" id="GO:0005794">
    <property type="term" value="C:Golgi apparatus"/>
    <property type="evidence" value="ECO:0007669"/>
    <property type="project" value="Ensembl"/>
</dbReference>
<dbReference type="GO" id="GO:0005886">
    <property type="term" value="C:plasma membrane"/>
    <property type="evidence" value="ECO:0007669"/>
    <property type="project" value="Ensembl"/>
</dbReference>
<dbReference type="InterPro" id="IPR008608">
    <property type="entry name" value="Ectropic_vir_integratn_site_2A"/>
</dbReference>
<dbReference type="PANTHER" id="PTHR15568">
    <property type="entry name" value="ECOTROPIC VIRAL INTEGRATION SITE 2A"/>
    <property type="match status" value="1"/>
</dbReference>
<dbReference type="PANTHER" id="PTHR15568:SF0">
    <property type="entry name" value="PROTEIN EVI2A"/>
    <property type="match status" value="1"/>
</dbReference>
<dbReference type="Pfam" id="PF05399">
    <property type="entry name" value="EVI2A"/>
    <property type="match status" value="1"/>
</dbReference>
<dbReference type="PIRSF" id="PIRSF019625">
    <property type="entry name" value="EVI_S2A"/>
    <property type="match status" value="1"/>
</dbReference>